<organism>
    <name type="scientific">Methylobacterium nodulans (strain LMG 21967 / CNCM I-2342 / ORS 2060)</name>
    <dbReference type="NCBI Taxonomy" id="460265"/>
    <lineage>
        <taxon>Bacteria</taxon>
        <taxon>Pseudomonadati</taxon>
        <taxon>Pseudomonadota</taxon>
        <taxon>Alphaproteobacteria</taxon>
        <taxon>Hyphomicrobiales</taxon>
        <taxon>Methylobacteriaceae</taxon>
        <taxon>Methylobacterium</taxon>
    </lineage>
</organism>
<protein>
    <recommendedName>
        <fullName evidence="1">DNA-directed RNA polymerase subunit omega</fullName>
        <shortName evidence="1">RNAP omega subunit</shortName>
        <ecNumber evidence="1">2.7.7.6</ecNumber>
    </recommendedName>
    <alternativeName>
        <fullName evidence="1">RNA polymerase omega subunit</fullName>
    </alternativeName>
    <alternativeName>
        <fullName evidence="1">Transcriptase subunit omega</fullName>
    </alternativeName>
</protein>
<keyword id="KW-0240">DNA-directed RNA polymerase</keyword>
<keyword id="KW-0548">Nucleotidyltransferase</keyword>
<keyword id="KW-1185">Reference proteome</keyword>
<keyword id="KW-0804">Transcription</keyword>
<keyword id="KW-0808">Transferase</keyword>
<dbReference type="EC" id="2.7.7.6" evidence="1"/>
<dbReference type="EMBL" id="CP001349">
    <property type="protein sequence ID" value="ACL55083.1"/>
    <property type="molecule type" value="Genomic_DNA"/>
</dbReference>
<dbReference type="RefSeq" id="WP_012634322.1">
    <property type="nucleotide sequence ID" value="NC_011894.1"/>
</dbReference>
<dbReference type="SMR" id="B8IT21"/>
<dbReference type="STRING" id="460265.Mnod_0032"/>
<dbReference type="KEGG" id="mno:Mnod_0032"/>
<dbReference type="eggNOG" id="COG1758">
    <property type="taxonomic scope" value="Bacteria"/>
</dbReference>
<dbReference type="HOGENOM" id="CLU_125406_2_0_5"/>
<dbReference type="OrthoDB" id="9796300at2"/>
<dbReference type="Proteomes" id="UP000008207">
    <property type="component" value="Chromosome"/>
</dbReference>
<dbReference type="GO" id="GO:0000428">
    <property type="term" value="C:DNA-directed RNA polymerase complex"/>
    <property type="evidence" value="ECO:0007669"/>
    <property type="project" value="UniProtKB-KW"/>
</dbReference>
<dbReference type="GO" id="GO:0003677">
    <property type="term" value="F:DNA binding"/>
    <property type="evidence" value="ECO:0007669"/>
    <property type="project" value="UniProtKB-UniRule"/>
</dbReference>
<dbReference type="GO" id="GO:0003899">
    <property type="term" value="F:DNA-directed RNA polymerase activity"/>
    <property type="evidence" value="ECO:0007669"/>
    <property type="project" value="UniProtKB-UniRule"/>
</dbReference>
<dbReference type="GO" id="GO:0006351">
    <property type="term" value="P:DNA-templated transcription"/>
    <property type="evidence" value="ECO:0007669"/>
    <property type="project" value="UniProtKB-UniRule"/>
</dbReference>
<dbReference type="Gene3D" id="3.90.940.10">
    <property type="match status" value="1"/>
</dbReference>
<dbReference type="HAMAP" id="MF_00366">
    <property type="entry name" value="RNApol_bact_RpoZ"/>
    <property type="match status" value="1"/>
</dbReference>
<dbReference type="InterPro" id="IPR003716">
    <property type="entry name" value="DNA-dir_RNA_pol_omega"/>
</dbReference>
<dbReference type="InterPro" id="IPR006110">
    <property type="entry name" value="Pol_omega/Rpo6/RPB6"/>
</dbReference>
<dbReference type="InterPro" id="IPR036161">
    <property type="entry name" value="RPB6/omega-like_sf"/>
</dbReference>
<dbReference type="NCBIfam" id="TIGR00690">
    <property type="entry name" value="rpoZ"/>
    <property type="match status" value="1"/>
</dbReference>
<dbReference type="PANTHER" id="PTHR34476">
    <property type="entry name" value="DNA-DIRECTED RNA POLYMERASE SUBUNIT OMEGA"/>
    <property type="match status" value="1"/>
</dbReference>
<dbReference type="PANTHER" id="PTHR34476:SF1">
    <property type="entry name" value="DNA-DIRECTED RNA POLYMERASE SUBUNIT OMEGA"/>
    <property type="match status" value="1"/>
</dbReference>
<dbReference type="Pfam" id="PF01192">
    <property type="entry name" value="RNA_pol_Rpb6"/>
    <property type="match status" value="1"/>
</dbReference>
<dbReference type="SMART" id="SM01409">
    <property type="entry name" value="RNA_pol_Rpb6"/>
    <property type="match status" value="1"/>
</dbReference>
<dbReference type="SUPFAM" id="SSF63562">
    <property type="entry name" value="RPB6/omega subunit-like"/>
    <property type="match status" value="1"/>
</dbReference>
<comment type="function">
    <text evidence="1">Promotes RNA polymerase assembly. Latches the N- and C-terminal regions of the beta' subunit thereby facilitating its interaction with the beta and alpha subunits.</text>
</comment>
<comment type="catalytic activity">
    <reaction evidence="1">
        <text>RNA(n) + a ribonucleoside 5'-triphosphate = RNA(n+1) + diphosphate</text>
        <dbReference type="Rhea" id="RHEA:21248"/>
        <dbReference type="Rhea" id="RHEA-COMP:14527"/>
        <dbReference type="Rhea" id="RHEA-COMP:17342"/>
        <dbReference type="ChEBI" id="CHEBI:33019"/>
        <dbReference type="ChEBI" id="CHEBI:61557"/>
        <dbReference type="ChEBI" id="CHEBI:140395"/>
        <dbReference type="EC" id="2.7.7.6"/>
    </reaction>
</comment>
<comment type="subunit">
    <text evidence="1">The RNAP catalytic core consists of 2 alpha, 1 beta, 1 beta' and 1 omega subunit. When a sigma factor is associated with the core the holoenzyme is formed, which can initiate transcription.</text>
</comment>
<comment type="similarity">
    <text evidence="1">Belongs to the RNA polymerase subunit omega family.</text>
</comment>
<evidence type="ECO:0000255" key="1">
    <source>
        <dbReference type="HAMAP-Rule" id="MF_00366"/>
    </source>
</evidence>
<evidence type="ECO:0000256" key="2">
    <source>
        <dbReference type="SAM" id="MobiDB-lite"/>
    </source>
</evidence>
<accession>B8IT21</accession>
<sequence>MARVTVEDCIDKVENRFELVLLAGHRARLLSSGAPLTVDRDRDKNPVVALREIADQTITPDDLKEQLIHSLQKYVEVDEPEAEAVPLLSSSPAAAAVAPQSSGDDGDIQFDRMSEEDLLRGLENLAPPTETEDEGD</sequence>
<name>RPOZ_METNO</name>
<gene>
    <name evidence="1" type="primary">rpoZ</name>
    <name type="ordered locus">Mnod_0032</name>
</gene>
<reference key="1">
    <citation type="submission" date="2009-01" db="EMBL/GenBank/DDBJ databases">
        <title>Complete sequence of chromosome of Methylobacterium nodulans ORS 2060.</title>
        <authorList>
            <consortium name="US DOE Joint Genome Institute"/>
            <person name="Lucas S."/>
            <person name="Copeland A."/>
            <person name="Lapidus A."/>
            <person name="Glavina del Rio T."/>
            <person name="Dalin E."/>
            <person name="Tice H."/>
            <person name="Bruce D."/>
            <person name="Goodwin L."/>
            <person name="Pitluck S."/>
            <person name="Sims D."/>
            <person name="Brettin T."/>
            <person name="Detter J.C."/>
            <person name="Han C."/>
            <person name="Larimer F."/>
            <person name="Land M."/>
            <person name="Hauser L."/>
            <person name="Kyrpides N."/>
            <person name="Ivanova N."/>
            <person name="Marx C.J."/>
            <person name="Richardson P."/>
        </authorList>
    </citation>
    <scope>NUCLEOTIDE SEQUENCE [LARGE SCALE GENOMIC DNA]</scope>
    <source>
        <strain>LMG 21967 / CNCM I-2342 / ORS 2060</strain>
    </source>
</reference>
<feature type="chain" id="PRO_1000194801" description="DNA-directed RNA polymerase subunit omega">
    <location>
        <begin position="1"/>
        <end position="136"/>
    </location>
</feature>
<feature type="region of interest" description="Disordered" evidence="2">
    <location>
        <begin position="81"/>
        <end position="136"/>
    </location>
</feature>
<feature type="compositionally biased region" description="Low complexity" evidence="2">
    <location>
        <begin position="83"/>
        <end position="99"/>
    </location>
</feature>
<feature type="compositionally biased region" description="Basic and acidic residues" evidence="2">
    <location>
        <begin position="109"/>
        <end position="120"/>
    </location>
</feature>
<proteinExistence type="inferred from homology"/>